<sequence length="112" mass="12331">MLDEKSSNTASVVVLCTAPDEATAQDLAAKVLAEKLAACATLIPGATSLYYWEGKLEQEYEVQMILKTTVSHQQALLECLKSHHPYQTPELLVLPVTHGDTDYLSWLNASLR</sequence>
<keyword id="KW-0186">Copper</keyword>
<keyword id="KW-0963">Cytoplasm</keyword>
<keyword id="KW-0479">Metal-binding</keyword>
<dbReference type="EMBL" id="CP001164">
    <property type="protein sequence ID" value="ACI39567.1"/>
    <property type="molecule type" value="Genomic_DNA"/>
</dbReference>
<dbReference type="RefSeq" id="WP_000883400.1">
    <property type="nucleotide sequence ID" value="NC_011353.1"/>
</dbReference>
<dbReference type="SMR" id="B5Z2E7"/>
<dbReference type="GeneID" id="93777687"/>
<dbReference type="KEGG" id="ecf:ECH74115_5653"/>
<dbReference type="HOGENOM" id="CLU_098807_3_0_6"/>
<dbReference type="GO" id="GO:0005737">
    <property type="term" value="C:cytoplasm"/>
    <property type="evidence" value="ECO:0007669"/>
    <property type="project" value="UniProtKB-SubCell"/>
</dbReference>
<dbReference type="GO" id="GO:0005507">
    <property type="term" value="F:copper ion binding"/>
    <property type="evidence" value="ECO:0007669"/>
    <property type="project" value="UniProtKB-UniRule"/>
</dbReference>
<dbReference type="GO" id="GO:0010038">
    <property type="term" value="P:response to metal ion"/>
    <property type="evidence" value="ECO:0007669"/>
    <property type="project" value="InterPro"/>
</dbReference>
<dbReference type="FunFam" id="3.30.70.120:FF:000004">
    <property type="entry name" value="Divalent-cation tolerance protein CutA"/>
    <property type="match status" value="1"/>
</dbReference>
<dbReference type="Gene3D" id="3.30.70.120">
    <property type="match status" value="1"/>
</dbReference>
<dbReference type="HAMAP" id="MF_01160">
    <property type="entry name" value="CutA"/>
    <property type="match status" value="1"/>
</dbReference>
<dbReference type="InterPro" id="IPR023700">
    <property type="entry name" value="CutA_Enterobact"/>
</dbReference>
<dbReference type="InterPro" id="IPR004323">
    <property type="entry name" value="Ion_tolerance_CutA"/>
</dbReference>
<dbReference type="InterPro" id="IPR011322">
    <property type="entry name" value="N-reg_PII-like_a/b"/>
</dbReference>
<dbReference type="InterPro" id="IPR015867">
    <property type="entry name" value="N-reg_PII/ATP_PRibTrfase_C"/>
</dbReference>
<dbReference type="NCBIfam" id="NF007930">
    <property type="entry name" value="PRK10645.1"/>
    <property type="match status" value="1"/>
</dbReference>
<dbReference type="PANTHER" id="PTHR23419">
    <property type="entry name" value="DIVALENT CATION TOLERANCE CUTA-RELATED"/>
    <property type="match status" value="1"/>
</dbReference>
<dbReference type="PANTHER" id="PTHR23419:SF8">
    <property type="entry name" value="FI09726P"/>
    <property type="match status" value="1"/>
</dbReference>
<dbReference type="Pfam" id="PF03091">
    <property type="entry name" value="CutA1"/>
    <property type="match status" value="1"/>
</dbReference>
<dbReference type="SUPFAM" id="SSF54913">
    <property type="entry name" value="GlnB-like"/>
    <property type="match status" value="1"/>
</dbReference>
<reference key="1">
    <citation type="journal article" date="2011" name="Proc. Natl. Acad. Sci. U.S.A.">
        <title>Genomic anatomy of Escherichia coli O157:H7 outbreaks.</title>
        <authorList>
            <person name="Eppinger M."/>
            <person name="Mammel M.K."/>
            <person name="Leclerc J.E."/>
            <person name="Ravel J."/>
            <person name="Cebula T.A."/>
        </authorList>
    </citation>
    <scope>NUCLEOTIDE SEQUENCE [LARGE SCALE GENOMIC DNA]</scope>
    <source>
        <strain>EC4115 / EHEC</strain>
    </source>
</reference>
<accession>B5Z2E7</accession>
<comment type="function">
    <text evidence="1">Involved in resistance toward heavy metals.</text>
</comment>
<comment type="cofactor">
    <cofactor evidence="1">
        <name>Cu cation</name>
        <dbReference type="ChEBI" id="CHEBI:23378"/>
    </cofactor>
    <text evidence="1">Binds 1 copper ion per subunit.</text>
</comment>
<comment type="subunit">
    <text evidence="1">Homotrimer.</text>
</comment>
<comment type="subcellular location">
    <subcellularLocation>
        <location evidence="1">Cytoplasm</location>
    </subcellularLocation>
</comment>
<comment type="similarity">
    <text evidence="1">Belongs to the CutA family.</text>
</comment>
<evidence type="ECO:0000255" key="1">
    <source>
        <dbReference type="HAMAP-Rule" id="MF_01160"/>
    </source>
</evidence>
<name>CUTA_ECO5E</name>
<gene>
    <name evidence="1" type="primary">cutA</name>
    <name type="ordered locus">ECH74115_5653</name>
</gene>
<protein>
    <recommendedName>
        <fullName evidence="1">Divalent-cation tolerance protein CutA</fullName>
    </recommendedName>
</protein>
<organism>
    <name type="scientific">Escherichia coli O157:H7 (strain EC4115 / EHEC)</name>
    <dbReference type="NCBI Taxonomy" id="444450"/>
    <lineage>
        <taxon>Bacteria</taxon>
        <taxon>Pseudomonadati</taxon>
        <taxon>Pseudomonadota</taxon>
        <taxon>Gammaproteobacteria</taxon>
        <taxon>Enterobacterales</taxon>
        <taxon>Enterobacteriaceae</taxon>
        <taxon>Escherichia</taxon>
    </lineage>
</organism>
<feature type="chain" id="PRO_1000137840" description="Divalent-cation tolerance protein CutA">
    <location>
        <begin position="1"/>
        <end position="112"/>
    </location>
</feature>
<feature type="binding site" evidence="1">
    <location>
        <position position="16"/>
    </location>
    <ligand>
        <name>Cu cation</name>
        <dbReference type="ChEBI" id="CHEBI:23378"/>
    </ligand>
</feature>
<feature type="binding site" evidence="1">
    <location>
        <position position="83"/>
    </location>
    <ligand>
        <name>Cu cation</name>
        <dbReference type="ChEBI" id="CHEBI:23378"/>
    </ligand>
</feature>
<feature type="binding site" evidence="1">
    <location>
        <position position="84"/>
    </location>
    <ligand>
        <name>Cu cation</name>
        <dbReference type="ChEBI" id="CHEBI:23378"/>
    </ligand>
</feature>
<proteinExistence type="inferred from homology"/>